<feature type="chain" id="PRO_1000134304" description="NADPH-dependent 7-cyano-7-deazaguanine reductase">
    <location>
        <begin position="1"/>
        <end position="148"/>
    </location>
</feature>
<feature type="active site" description="Thioimide intermediate" evidence="1">
    <location>
        <position position="50"/>
    </location>
</feature>
<feature type="active site" description="Proton donor" evidence="1">
    <location>
        <position position="57"/>
    </location>
</feature>
<feature type="binding site" evidence="1">
    <location>
        <begin position="72"/>
        <end position="74"/>
    </location>
    <ligand>
        <name>substrate</name>
    </ligand>
</feature>
<feature type="binding site" evidence="1">
    <location>
        <begin position="91"/>
        <end position="92"/>
    </location>
    <ligand>
        <name>substrate</name>
    </ligand>
</feature>
<comment type="function">
    <text evidence="1">Catalyzes the NADPH-dependent reduction of 7-cyano-7-deazaguanine (preQ0) to 7-aminomethyl-7-deazaguanine (preQ1).</text>
</comment>
<comment type="catalytic activity">
    <reaction evidence="1">
        <text>7-aminomethyl-7-carbaguanine + 2 NADP(+) = 7-cyano-7-deazaguanine + 2 NADPH + 3 H(+)</text>
        <dbReference type="Rhea" id="RHEA:13409"/>
        <dbReference type="ChEBI" id="CHEBI:15378"/>
        <dbReference type="ChEBI" id="CHEBI:45075"/>
        <dbReference type="ChEBI" id="CHEBI:57783"/>
        <dbReference type="ChEBI" id="CHEBI:58349"/>
        <dbReference type="ChEBI" id="CHEBI:58703"/>
        <dbReference type="EC" id="1.7.1.13"/>
    </reaction>
</comment>
<comment type="pathway">
    <text evidence="1">tRNA modification; tRNA-queuosine biosynthesis.</text>
</comment>
<comment type="subcellular location">
    <subcellularLocation>
        <location evidence="1">Cytoplasm</location>
    </subcellularLocation>
</comment>
<comment type="similarity">
    <text evidence="1">Belongs to the GTP cyclohydrolase I family. QueF type 1 subfamily.</text>
</comment>
<reference key="1">
    <citation type="journal article" date="2009" name="J. Bacteriol.">
        <title>The complete genome sequence of Helicobacter pylori strain G27.</title>
        <authorList>
            <person name="Baltrus D.A."/>
            <person name="Amieva M.R."/>
            <person name="Covacci A."/>
            <person name="Lowe T.M."/>
            <person name="Merrell D.S."/>
            <person name="Ottemann K.M."/>
            <person name="Stein M."/>
            <person name="Salama N.R."/>
            <person name="Guillemin K."/>
        </authorList>
    </citation>
    <scope>NUCLEOTIDE SEQUENCE [LARGE SCALE GENOMIC DNA]</scope>
    <source>
        <strain>G27</strain>
    </source>
</reference>
<protein>
    <recommendedName>
        <fullName evidence="1">NADPH-dependent 7-cyano-7-deazaguanine reductase</fullName>
        <ecNumber evidence="1">1.7.1.13</ecNumber>
    </recommendedName>
    <alternativeName>
        <fullName evidence="1">7-cyano-7-carbaguanine reductase</fullName>
    </alternativeName>
    <alternativeName>
        <fullName evidence="1">NADPH-dependent nitrile oxidoreductase</fullName>
    </alternativeName>
    <alternativeName>
        <fullName evidence="1">PreQ(0) reductase</fullName>
    </alternativeName>
</protein>
<keyword id="KW-0963">Cytoplasm</keyword>
<keyword id="KW-0521">NADP</keyword>
<keyword id="KW-0560">Oxidoreductase</keyword>
<keyword id="KW-0671">Queuosine biosynthesis</keyword>
<keyword id="KW-1185">Reference proteome</keyword>
<sequence length="148" mass="17065">MTPELNLKSLGAKTPYIFEYNSDLLEAFPNPNPNLDPLITLECKEFTSLCPITSQPDFGVIFIRYIPKDKMVESKSLKLYLFSYRNHGSFHESCINTILLDLVQLLEPKYLEVYGDFASRGGIAIKPFVNYAIKEYQEFKEKRLLNAK</sequence>
<name>QUEF_HELPG</name>
<evidence type="ECO:0000255" key="1">
    <source>
        <dbReference type="HAMAP-Rule" id="MF_00818"/>
    </source>
</evidence>
<accession>B5Z935</accession>
<proteinExistence type="inferred from homology"/>
<dbReference type="EC" id="1.7.1.13" evidence="1"/>
<dbReference type="EMBL" id="CP001173">
    <property type="protein sequence ID" value="ACI28084.1"/>
    <property type="molecule type" value="Genomic_DNA"/>
</dbReference>
<dbReference type="RefSeq" id="WP_000187101.1">
    <property type="nucleotide sequence ID" value="NC_011333.1"/>
</dbReference>
<dbReference type="SMR" id="B5Z935"/>
<dbReference type="KEGG" id="hpg:HPG27_1336"/>
<dbReference type="HOGENOM" id="CLU_102489_0_1_7"/>
<dbReference type="UniPathway" id="UPA00392"/>
<dbReference type="Proteomes" id="UP000001735">
    <property type="component" value="Chromosome"/>
</dbReference>
<dbReference type="GO" id="GO:0005737">
    <property type="term" value="C:cytoplasm"/>
    <property type="evidence" value="ECO:0007669"/>
    <property type="project" value="UniProtKB-SubCell"/>
</dbReference>
<dbReference type="GO" id="GO:0033739">
    <property type="term" value="F:preQ1 synthase activity"/>
    <property type="evidence" value="ECO:0007669"/>
    <property type="project" value="UniProtKB-UniRule"/>
</dbReference>
<dbReference type="GO" id="GO:0008616">
    <property type="term" value="P:queuosine biosynthetic process"/>
    <property type="evidence" value="ECO:0007669"/>
    <property type="project" value="UniProtKB-UniRule"/>
</dbReference>
<dbReference type="GO" id="GO:0006400">
    <property type="term" value="P:tRNA modification"/>
    <property type="evidence" value="ECO:0007669"/>
    <property type="project" value="UniProtKB-UniRule"/>
</dbReference>
<dbReference type="Gene3D" id="3.30.1130.10">
    <property type="match status" value="1"/>
</dbReference>
<dbReference type="HAMAP" id="MF_00818">
    <property type="entry name" value="QueF_type1"/>
    <property type="match status" value="1"/>
</dbReference>
<dbReference type="InterPro" id="IPR043133">
    <property type="entry name" value="GTP-CH-I_C/QueF"/>
</dbReference>
<dbReference type="InterPro" id="IPR050084">
    <property type="entry name" value="NADPH_dep_7-cyano-7-deazaG_red"/>
</dbReference>
<dbReference type="InterPro" id="IPR029500">
    <property type="entry name" value="QueF"/>
</dbReference>
<dbReference type="InterPro" id="IPR016856">
    <property type="entry name" value="QueF_type1"/>
</dbReference>
<dbReference type="NCBIfam" id="TIGR03139">
    <property type="entry name" value="QueF-II"/>
    <property type="match status" value="1"/>
</dbReference>
<dbReference type="PANTHER" id="PTHR34354">
    <property type="entry name" value="NADPH-DEPENDENT 7-CYANO-7-DEAZAGUANINE REDUCTASE"/>
    <property type="match status" value="1"/>
</dbReference>
<dbReference type="PANTHER" id="PTHR34354:SF1">
    <property type="entry name" value="NADPH-DEPENDENT 7-CYANO-7-DEAZAGUANINE REDUCTASE"/>
    <property type="match status" value="1"/>
</dbReference>
<dbReference type="Pfam" id="PF14489">
    <property type="entry name" value="QueF"/>
    <property type="match status" value="1"/>
</dbReference>
<dbReference type="PIRSF" id="PIRSF027377">
    <property type="entry name" value="Nitrile_oxidored_QueF"/>
    <property type="match status" value="1"/>
</dbReference>
<dbReference type="SUPFAM" id="SSF55620">
    <property type="entry name" value="Tetrahydrobiopterin biosynthesis enzymes-like"/>
    <property type="match status" value="1"/>
</dbReference>
<gene>
    <name evidence="1" type="primary">queF</name>
    <name type="ordered locus">HPG27_1336</name>
</gene>
<organism>
    <name type="scientific">Helicobacter pylori (strain G27)</name>
    <dbReference type="NCBI Taxonomy" id="563041"/>
    <lineage>
        <taxon>Bacteria</taxon>
        <taxon>Pseudomonadati</taxon>
        <taxon>Campylobacterota</taxon>
        <taxon>Epsilonproteobacteria</taxon>
        <taxon>Campylobacterales</taxon>
        <taxon>Helicobacteraceae</taxon>
        <taxon>Helicobacter</taxon>
    </lineage>
</organism>